<proteinExistence type="inferred from homology"/>
<evidence type="ECO:0000255" key="1">
    <source>
        <dbReference type="HAMAP-Rule" id="MF_01080"/>
    </source>
</evidence>
<reference key="1">
    <citation type="journal article" date="2003" name="Nat. Genet.">
        <title>Comparative analysis of the genome sequences of Bordetella pertussis, Bordetella parapertussis and Bordetella bronchiseptica.</title>
        <authorList>
            <person name="Parkhill J."/>
            <person name="Sebaihia M."/>
            <person name="Preston A."/>
            <person name="Murphy L.D."/>
            <person name="Thomson N.R."/>
            <person name="Harris D.E."/>
            <person name="Holden M.T.G."/>
            <person name="Churcher C.M."/>
            <person name="Bentley S.D."/>
            <person name="Mungall K.L."/>
            <person name="Cerdeno-Tarraga A.-M."/>
            <person name="Temple L."/>
            <person name="James K.D."/>
            <person name="Harris B."/>
            <person name="Quail M.A."/>
            <person name="Achtman M."/>
            <person name="Atkin R."/>
            <person name="Baker S."/>
            <person name="Basham D."/>
            <person name="Bason N."/>
            <person name="Cherevach I."/>
            <person name="Chillingworth T."/>
            <person name="Collins M."/>
            <person name="Cronin A."/>
            <person name="Davis P."/>
            <person name="Doggett J."/>
            <person name="Feltwell T."/>
            <person name="Goble A."/>
            <person name="Hamlin N."/>
            <person name="Hauser H."/>
            <person name="Holroyd S."/>
            <person name="Jagels K."/>
            <person name="Leather S."/>
            <person name="Moule S."/>
            <person name="Norberczak H."/>
            <person name="O'Neil S."/>
            <person name="Ormond D."/>
            <person name="Price C."/>
            <person name="Rabbinowitsch E."/>
            <person name="Rutter S."/>
            <person name="Sanders M."/>
            <person name="Saunders D."/>
            <person name="Seeger K."/>
            <person name="Sharp S."/>
            <person name="Simmonds M."/>
            <person name="Skelton J."/>
            <person name="Squares R."/>
            <person name="Squares S."/>
            <person name="Stevens K."/>
            <person name="Unwin L."/>
            <person name="Whitehead S."/>
            <person name="Barrell B.G."/>
            <person name="Maskell D.J."/>
        </authorList>
    </citation>
    <scope>NUCLEOTIDE SEQUENCE [LARGE SCALE GENOMIC DNA]</scope>
    <source>
        <strain>12822 / ATCC BAA-587 / NCTC 13253</strain>
    </source>
</reference>
<organism>
    <name type="scientific">Bordetella parapertussis (strain 12822 / ATCC BAA-587 / NCTC 13253)</name>
    <dbReference type="NCBI Taxonomy" id="257311"/>
    <lineage>
        <taxon>Bacteria</taxon>
        <taxon>Pseudomonadati</taxon>
        <taxon>Pseudomonadota</taxon>
        <taxon>Betaproteobacteria</taxon>
        <taxon>Burkholderiales</taxon>
        <taxon>Alcaligenaceae</taxon>
        <taxon>Bordetella</taxon>
    </lineage>
</organism>
<accession>P59874</accession>
<keyword id="KW-0413">Isomerase</keyword>
<keyword id="KW-0819">tRNA processing</keyword>
<feature type="chain" id="PRO_0000121800" description="tRNA pseudouridine synthase B">
    <location>
        <begin position="1"/>
        <end position="244"/>
    </location>
</feature>
<feature type="active site" description="Nucleophile" evidence="1">
    <location>
        <position position="46"/>
    </location>
</feature>
<gene>
    <name evidence="1" type="primary">truB</name>
    <name type="ordered locus">BPP1864</name>
</gene>
<comment type="function">
    <text evidence="1">Responsible for synthesis of pseudouridine from uracil-55 in the psi GC loop of transfer RNAs.</text>
</comment>
<comment type="catalytic activity">
    <reaction evidence="1">
        <text>uridine(55) in tRNA = pseudouridine(55) in tRNA</text>
        <dbReference type="Rhea" id="RHEA:42532"/>
        <dbReference type="Rhea" id="RHEA-COMP:10101"/>
        <dbReference type="Rhea" id="RHEA-COMP:10102"/>
        <dbReference type="ChEBI" id="CHEBI:65314"/>
        <dbReference type="ChEBI" id="CHEBI:65315"/>
        <dbReference type="EC" id="5.4.99.25"/>
    </reaction>
</comment>
<comment type="similarity">
    <text evidence="1">Belongs to the pseudouridine synthase TruB family. Type 1 subfamily.</text>
</comment>
<sequence length="244" mass="26211">MAKRRGLALDGVLLLDKPVGLSSNHALQRAKRTVDAAKAGHTGTLDPFATGLLVCCMGRATKISGRMLEADKTYQAMLQFGEETDSGDLTGHIVARAPDGFAGVEEAALRDVLSRFVGTIEQIPPMYSALKRDGKPLYEYARAGIELDRPPRQVTIRHIELLSFSGMQAQIDVACSKGTYIRTLAQDIGRALGCHAHLAALRRTHVGPFSLDRAVTLEALQAMPDAKQALLAMNELPAGLLPAT</sequence>
<name>TRUB_BORPA</name>
<dbReference type="EC" id="5.4.99.25" evidence="1"/>
<dbReference type="EMBL" id="BX640428">
    <property type="protein sequence ID" value="CAE37165.1"/>
    <property type="molecule type" value="Genomic_DNA"/>
</dbReference>
<dbReference type="RefSeq" id="WP_010928247.1">
    <property type="nucleotide sequence ID" value="NC_002928.3"/>
</dbReference>
<dbReference type="SMR" id="P59874"/>
<dbReference type="GeneID" id="93203633"/>
<dbReference type="KEGG" id="bpa:BPP1864"/>
<dbReference type="HOGENOM" id="CLU_032087_2_0_4"/>
<dbReference type="Proteomes" id="UP000001421">
    <property type="component" value="Chromosome"/>
</dbReference>
<dbReference type="GO" id="GO:0003723">
    <property type="term" value="F:RNA binding"/>
    <property type="evidence" value="ECO:0007669"/>
    <property type="project" value="InterPro"/>
</dbReference>
<dbReference type="GO" id="GO:0160148">
    <property type="term" value="F:tRNA pseudouridine(55) synthase activity"/>
    <property type="evidence" value="ECO:0007669"/>
    <property type="project" value="UniProtKB-EC"/>
</dbReference>
<dbReference type="GO" id="GO:1990481">
    <property type="term" value="P:mRNA pseudouridine synthesis"/>
    <property type="evidence" value="ECO:0007669"/>
    <property type="project" value="TreeGrafter"/>
</dbReference>
<dbReference type="GO" id="GO:0031119">
    <property type="term" value="P:tRNA pseudouridine synthesis"/>
    <property type="evidence" value="ECO:0007669"/>
    <property type="project" value="UniProtKB-UniRule"/>
</dbReference>
<dbReference type="CDD" id="cd02573">
    <property type="entry name" value="PseudoU_synth_EcTruB"/>
    <property type="match status" value="1"/>
</dbReference>
<dbReference type="Gene3D" id="3.30.2350.10">
    <property type="entry name" value="Pseudouridine synthase"/>
    <property type="match status" value="1"/>
</dbReference>
<dbReference type="HAMAP" id="MF_01080">
    <property type="entry name" value="TruB_bact"/>
    <property type="match status" value="1"/>
</dbReference>
<dbReference type="InterPro" id="IPR020103">
    <property type="entry name" value="PsdUridine_synth_cat_dom_sf"/>
</dbReference>
<dbReference type="InterPro" id="IPR002501">
    <property type="entry name" value="PsdUridine_synth_N"/>
</dbReference>
<dbReference type="InterPro" id="IPR014780">
    <property type="entry name" value="tRNA_psdUridine_synth_TruB"/>
</dbReference>
<dbReference type="InterPro" id="IPR032819">
    <property type="entry name" value="TruB_C"/>
</dbReference>
<dbReference type="NCBIfam" id="TIGR00431">
    <property type="entry name" value="TruB"/>
    <property type="match status" value="1"/>
</dbReference>
<dbReference type="PANTHER" id="PTHR13767:SF2">
    <property type="entry name" value="PSEUDOURIDYLATE SYNTHASE TRUB1"/>
    <property type="match status" value="1"/>
</dbReference>
<dbReference type="PANTHER" id="PTHR13767">
    <property type="entry name" value="TRNA-PSEUDOURIDINE SYNTHASE"/>
    <property type="match status" value="1"/>
</dbReference>
<dbReference type="Pfam" id="PF16198">
    <property type="entry name" value="TruB_C_2"/>
    <property type="match status" value="1"/>
</dbReference>
<dbReference type="Pfam" id="PF01509">
    <property type="entry name" value="TruB_N"/>
    <property type="match status" value="1"/>
</dbReference>
<dbReference type="SUPFAM" id="SSF55120">
    <property type="entry name" value="Pseudouridine synthase"/>
    <property type="match status" value="1"/>
</dbReference>
<protein>
    <recommendedName>
        <fullName evidence="1">tRNA pseudouridine synthase B</fullName>
        <ecNumber evidence="1">5.4.99.25</ecNumber>
    </recommendedName>
    <alternativeName>
        <fullName evidence="1">tRNA pseudouridine(55) synthase</fullName>
        <shortName evidence="1">Psi55 synthase</shortName>
    </alternativeName>
    <alternativeName>
        <fullName evidence="1">tRNA pseudouridylate synthase</fullName>
    </alternativeName>
    <alternativeName>
        <fullName evidence="1">tRNA-uridine isomerase</fullName>
    </alternativeName>
</protein>